<reference key="1">
    <citation type="journal article" date="2005" name="Gene">
        <title>The first complete chloroplast genome sequence of a lycophyte, Huperzia lucidula (Lycopodiaceae).</title>
        <authorList>
            <person name="Wolf P.G."/>
            <person name="Karol K.G."/>
            <person name="Mandoli D.F."/>
            <person name="Kuehl J.V."/>
            <person name="Arumuganathan K."/>
            <person name="Ellis M.W."/>
            <person name="Mishler B.D."/>
            <person name="Kelch D.G."/>
            <person name="Olmstead R.G."/>
            <person name="Boore J.L."/>
        </authorList>
    </citation>
    <scope>NUCLEOTIDE SEQUENCE [LARGE SCALE GENOMIC DNA]</scope>
</reference>
<proteinExistence type="inferred from homology"/>
<sequence length="532" mass="63605">MAKTLFVFTSFPRGYSRNCLQSFFKKKELGPKKIDDSSLNNHFSFITRKRLISKIRQQNLLETLALWINKYLSGGGHNKKNQSFDYCINYYFESIREVLTSVLQIVQLQPLLEEINELNSFQSIHSIFPSMEDHFSHRHHFSDIKIPYFIHPEILIRIFRRRIQDAPFSHLLRFVFYEYQNIIVLDKSIPLSWKEISKLSTFLWNYYVHEFESTLVSLWKRTFHFNSFPYGALLDRTQSIRKVKHIEKLPHFKKSPRIIILSGNIPLCVKKYSIHYVRYENNLMIALKGTKFLVHKWKCYIIRFWQYYFHCWFKPCRVSPRESSKECLTFLGYILGIRPQIIVVQAKMINNLPITSIISKELCAIIPVFHSIKLLAREKFCNTLGHPIGKLAWTTSEDDDIPNQFNHIWKNIFYYYSGCLNRNGLYQIQYILRFSCAKTLACKHKSTIRVVWKKYGSRRLFPRYSSYKERESPFLSRVYSHKKRFWYLDVIQVDFIADSLQKGRIPEFKTNFTNKKLIKQLPEQTQYDSVIL</sequence>
<name>MATK_HUPLU</name>
<feature type="chain" id="PRO_0000363782" description="Maturase K">
    <location>
        <begin position="1"/>
        <end position="532"/>
    </location>
</feature>
<accession>Q5SCW7</accession>
<geneLocation type="chloroplast"/>
<dbReference type="EMBL" id="AY660566">
    <property type="protein sequence ID" value="AAT80733.1"/>
    <property type="status" value="ALT_INIT"/>
    <property type="molecule type" value="Genomic_DNA"/>
</dbReference>
<dbReference type="RefSeq" id="YP_209537.1">
    <property type="nucleotide sequence ID" value="NC_006861.1"/>
</dbReference>
<dbReference type="GeneID" id="3283838"/>
<dbReference type="GO" id="GO:0009507">
    <property type="term" value="C:chloroplast"/>
    <property type="evidence" value="ECO:0007669"/>
    <property type="project" value="UniProtKB-SubCell"/>
</dbReference>
<dbReference type="GO" id="GO:0003723">
    <property type="term" value="F:RNA binding"/>
    <property type="evidence" value="ECO:0007669"/>
    <property type="project" value="UniProtKB-KW"/>
</dbReference>
<dbReference type="GO" id="GO:0006397">
    <property type="term" value="P:mRNA processing"/>
    <property type="evidence" value="ECO:0007669"/>
    <property type="project" value="UniProtKB-KW"/>
</dbReference>
<dbReference type="GO" id="GO:0008380">
    <property type="term" value="P:RNA splicing"/>
    <property type="evidence" value="ECO:0007669"/>
    <property type="project" value="UniProtKB-UniRule"/>
</dbReference>
<dbReference type="GO" id="GO:0008033">
    <property type="term" value="P:tRNA processing"/>
    <property type="evidence" value="ECO:0007669"/>
    <property type="project" value="UniProtKB-KW"/>
</dbReference>
<dbReference type="HAMAP" id="MF_01390">
    <property type="entry name" value="MatK"/>
    <property type="match status" value="1"/>
</dbReference>
<dbReference type="InterPro" id="IPR024937">
    <property type="entry name" value="Domain_X"/>
</dbReference>
<dbReference type="InterPro" id="IPR002866">
    <property type="entry name" value="Maturase_MatK"/>
</dbReference>
<dbReference type="InterPro" id="IPR024942">
    <property type="entry name" value="Maturase_MatK_N"/>
</dbReference>
<dbReference type="PANTHER" id="PTHR34811">
    <property type="entry name" value="MATURASE K"/>
    <property type="match status" value="1"/>
</dbReference>
<dbReference type="PANTHER" id="PTHR34811:SF1">
    <property type="entry name" value="MATURASE K"/>
    <property type="match status" value="1"/>
</dbReference>
<dbReference type="Pfam" id="PF01348">
    <property type="entry name" value="Intron_maturas2"/>
    <property type="match status" value="1"/>
</dbReference>
<dbReference type="Pfam" id="PF01824">
    <property type="entry name" value="MatK_N"/>
    <property type="match status" value="1"/>
</dbReference>
<evidence type="ECO:0000250" key="1"/>
<evidence type="ECO:0000305" key="2"/>
<keyword id="KW-0150">Chloroplast</keyword>
<keyword id="KW-0507">mRNA processing</keyword>
<keyword id="KW-0934">Plastid</keyword>
<keyword id="KW-0694">RNA-binding</keyword>
<keyword id="KW-0819">tRNA processing</keyword>
<protein>
    <recommendedName>
        <fullName>Maturase K</fullName>
    </recommendedName>
    <alternativeName>
        <fullName>Intron maturase</fullName>
    </alternativeName>
</protein>
<organism>
    <name type="scientific">Huperzia lucidula</name>
    <name type="common">Shining clubmoss</name>
    <name type="synonym">Lycopodium lucidulum</name>
    <dbReference type="NCBI Taxonomy" id="37429"/>
    <lineage>
        <taxon>Eukaryota</taxon>
        <taxon>Viridiplantae</taxon>
        <taxon>Streptophyta</taxon>
        <taxon>Embryophyta</taxon>
        <taxon>Tracheophyta</taxon>
        <taxon>Lycopodiopsida</taxon>
        <taxon>Lycopodiales</taxon>
        <taxon>Lycopodiaceae</taxon>
        <taxon>Huperzioideae</taxon>
        <taxon>Huperzia</taxon>
    </lineage>
</organism>
<comment type="function">
    <text evidence="1">Usually encoded in the trnK tRNA gene intron. Probably assists in splicing its own and other chloroplast group II introns (By similarity).</text>
</comment>
<comment type="subcellular location">
    <subcellularLocation>
        <location>Plastid</location>
        <location>Chloroplast</location>
    </subcellularLocation>
</comment>
<comment type="similarity">
    <text evidence="2">Belongs to the intron maturase 2 family. MatK subfamily.</text>
</comment>
<comment type="caution">
    <text evidence="2">The start codon has not been identified for this gene.</text>
</comment>
<comment type="sequence caution" evidence="2">
    <conflict type="erroneous initiation">
        <sequence resource="EMBL-CDS" id="AAT80733"/>
    </conflict>
</comment>
<gene>
    <name type="primary">matK</name>
</gene>